<gene>
    <name evidence="1" type="primary">proS</name>
    <name type="ordered locus">HS_1305</name>
</gene>
<sequence length="571" mass="63964">MRTSKYLLSTLKETPNDAQVVSHQLMLRAGMIRPLASGLYNWLPTGLRVLKKVENIVREEMNKSGAIEVEMPVVQPAELWQESQRWEQYGPELLRFVDRGNRDFVLGPTHEEVITDLVHREVSSYKQLPLNLYQIQTKFRDEVRPRFGVMRGREFLMKDAYSFHTSKECLQNTYDVMYRTYNNIFTRLGLDFRAVQADTGSIGGSASHEFQVLAKSGEDDIVFSSNSDYAANIELAEAVAIGQRQAPSATMELVDTPNAKTINDLVEQFNLSVEKTVKTLIVKGANEGQPLIALIVRGDHELNEVKAQKLPEVADPLEFANEDEIKTKIGASIGSLGPVNLPIPAIIDRSVALMSDFSTGANIDGKHYFNVNWDRDVALPKVADLRNVVEGDPSPDGKGTLQIKRGIEVGHIFQLGTKYSEAMKATVQGEDGRPQTMIMGCYGIGVSRVVAATIEQCHDEKGIIWSSDEIAPFTVAIIPMNMYKSKNVQIFAEELYQSLLNKNVDVIFDDRKERPGVMFADMELIGVPHMIVIGEKNLEKGEIEYKNRRTGEKQIIAKEQVLDFLAQRVNA</sequence>
<reference key="1">
    <citation type="journal article" date="2007" name="J. Bacteriol.">
        <title>Complete genome sequence of Haemophilus somnus (Histophilus somni) strain 129Pt and comparison to Haemophilus ducreyi 35000HP and Haemophilus influenzae Rd.</title>
        <authorList>
            <person name="Challacombe J.F."/>
            <person name="Duncan A.J."/>
            <person name="Brettin T.S."/>
            <person name="Bruce D."/>
            <person name="Chertkov O."/>
            <person name="Detter J.C."/>
            <person name="Han C.S."/>
            <person name="Misra M."/>
            <person name="Richardson P."/>
            <person name="Tapia R."/>
            <person name="Thayer N."/>
            <person name="Xie G."/>
            <person name="Inzana T.J."/>
        </authorList>
    </citation>
    <scope>NUCLEOTIDE SEQUENCE [LARGE SCALE GENOMIC DNA]</scope>
    <source>
        <strain>129Pt</strain>
    </source>
</reference>
<name>SYP_HISS1</name>
<dbReference type="EC" id="6.1.1.15" evidence="1"/>
<dbReference type="EMBL" id="CP000436">
    <property type="protein sequence ID" value="ABI25580.1"/>
    <property type="molecule type" value="Genomic_DNA"/>
</dbReference>
<dbReference type="SMR" id="Q0I4S8"/>
<dbReference type="KEGG" id="hso:HS_1305"/>
<dbReference type="eggNOG" id="COG0442">
    <property type="taxonomic scope" value="Bacteria"/>
</dbReference>
<dbReference type="HOGENOM" id="CLU_016739_0_0_6"/>
<dbReference type="GO" id="GO:0005829">
    <property type="term" value="C:cytosol"/>
    <property type="evidence" value="ECO:0007669"/>
    <property type="project" value="TreeGrafter"/>
</dbReference>
<dbReference type="GO" id="GO:0002161">
    <property type="term" value="F:aminoacyl-tRNA deacylase activity"/>
    <property type="evidence" value="ECO:0007669"/>
    <property type="project" value="InterPro"/>
</dbReference>
<dbReference type="GO" id="GO:0005524">
    <property type="term" value="F:ATP binding"/>
    <property type="evidence" value="ECO:0007669"/>
    <property type="project" value="UniProtKB-UniRule"/>
</dbReference>
<dbReference type="GO" id="GO:0004827">
    <property type="term" value="F:proline-tRNA ligase activity"/>
    <property type="evidence" value="ECO:0007669"/>
    <property type="project" value="UniProtKB-UniRule"/>
</dbReference>
<dbReference type="GO" id="GO:0006433">
    <property type="term" value="P:prolyl-tRNA aminoacylation"/>
    <property type="evidence" value="ECO:0007669"/>
    <property type="project" value="UniProtKB-UniRule"/>
</dbReference>
<dbReference type="CDD" id="cd04334">
    <property type="entry name" value="ProRS-INS"/>
    <property type="match status" value="1"/>
</dbReference>
<dbReference type="CDD" id="cd00861">
    <property type="entry name" value="ProRS_anticodon_short"/>
    <property type="match status" value="1"/>
</dbReference>
<dbReference type="CDD" id="cd00779">
    <property type="entry name" value="ProRS_core_prok"/>
    <property type="match status" value="1"/>
</dbReference>
<dbReference type="FunFam" id="3.30.930.10:FF:000043">
    <property type="entry name" value="Proline--tRNA ligase"/>
    <property type="match status" value="1"/>
</dbReference>
<dbReference type="FunFam" id="3.30.930.10:FF:000097">
    <property type="entry name" value="Proline--tRNA ligase"/>
    <property type="match status" value="1"/>
</dbReference>
<dbReference type="FunFam" id="3.40.50.800:FF:000006">
    <property type="entry name" value="Proline--tRNA ligase"/>
    <property type="match status" value="1"/>
</dbReference>
<dbReference type="FunFam" id="3.90.960.10:FF:000001">
    <property type="entry name" value="Proline--tRNA ligase"/>
    <property type="match status" value="1"/>
</dbReference>
<dbReference type="Gene3D" id="3.40.50.800">
    <property type="entry name" value="Anticodon-binding domain"/>
    <property type="match status" value="1"/>
</dbReference>
<dbReference type="Gene3D" id="3.30.930.10">
    <property type="entry name" value="Bira Bifunctional Protein, Domain 2"/>
    <property type="match status" value="2"/>
</dbReference>
<dbReference type="HAMAP" id="MF_01569">
    <property type="entry name" value="Pro_tRNA_synth_type1"/>
    <property type="match status" value="1"/>
</dbReference>
<dbReference type="InterPro" id="IPR002314">
    <property type="entry name" value="aa-tRNA-synt_IIb"/>
</dbReference>
<dbReference type="InterPro" id="IPR006195">
    <property type="entry name" value="aa-tRNA-synth_II"/>
</dbReference>
<dbReference type="InterPro" id="IPR045864">
    <property type="entry name" value="aa-tRNA-synth_II/BPL/LPL"/>
</dbReference>
<dbReference type="InterPro" id="IPR004154">
    <property type="entry name" value="Anticodon-bd"/>
</dbReference>
<dbReference type="InterPro" id="IPR036621">
    <property type="entry name" value="Anticodon-bd_dom_sf"/>
</dbReference>
<dbReference type="InterPro" id="IPR002316">
    <property type="entry name" value="Pro-tRNA-ligase_IIa"/>
</dbReference>
<dbReference type="InterPro" id="IPR004500">
    <property type="entry name" value="Pro-tRNA-synth_IIa_bac-type"/>
</dbReference>
<dbReference type="InterPro" id="IPR023717">
    <property type="entry name" value="Pro-tRNA-Synthase_IIa_type1"/>
</dbReference>
<dbReference type="InterPro" id="IPR050062">
    <property type="entry name" value="Pro-tRNA_synthetase"/>
</dbReference>
<dbReference type="InterPro" id="IPR044140">
    <property type="entry name" value="ProRS_anticodon_short"/>
</dbReference>
<dbReference type="InterPro" id="IPR033730">
    <property type="entry name" value="ProRS_core_prok"/>
</dbReference>
<dbReference type="InterPro" id="IPR036754">
    <property type="entry name" value="YbaK/aa-tRNA-synt-asso_dom_sf"/>
</dbReference>
<dbReference type="InterPro" id="IPR007214">
    <property type="entry name" value="YbaK/aa-tRNA-synth-assoc-dom"/>
</dbReference>
<dbReference type="NCBIfam" id="NF006625">
    <property type="entry name" value="PRK09194.1"/>
    <property type="match status" value="1"/>
</dbReference>
<dbReference type="NCBIfam" id="TIGR00409">
    <property type="entry name" value="proS_fam_II"/>
    <property type="match status" value="1"/>
</dbReference>
<dbReference type="PANTHER" id="PTHR42753">
    <property type="entry name" value="MITOCHONDRIAL RIBOSOME PROTEIN L39/PROLYL-TRNA LIGASE FAMILY MEMBER"/>
    <property type="match status" value="1"/>
</dbReference>
<dbReference type="PANTHER" id="PTHR42753:SF2">
    <property type="entry name" value="PROLINE--TRNA LIGASE"/>
    <property type="match status" value="1"/>
</dbReference>
<dbReference type="Pfam" id="PF03129">
    <property type="entry name" value="HGTP_anticodon"/>
    <property type="match status" value="1"/>
</dbReference>
<dbReference type="Pfam" id="PF00587">
    <property type="entry name" value="tRNA-synt_2b"/>
    <property type="match status" value="1"/>
</dbReference>
<dbReference type="Pfam" id="PF04073">
    <property type="entry name" value="tRNA_edit"/>
    <property type="match status" value="1"/>
</dbReference>
<dbReference type="PIRSF" id="PIRSF001535">
    <property type="entry name" value="ProRS_1"/>
    <property type="match status" value="1"/>
</dbReference>
<dbReference type="PRINTS" id="PR01046">
    <property type="entry name" value="TRNASYNTHPRO"/>
</dbReference>
<dbReference type="SUPFAM" id="SSF52954">
    <property type="entry name" value="Class II aaRS ABD-related"/>
    <property type="match status" value="1"/>
</dbReference>
<dbReference type="SUPFAM" id="SSF55681">
    <property type="entry name" value="Class II aaRS and biotin synthetases"/>
    <property type="match status" value="1"/>
</dbReference>
<dbReference type="SUPFAM" id="SSF55826">
    <property type="entry name" value="YbaK/ProRS associated domain"/>
    <property type="match status" value="1"/>
</dbReference>
<dbReference type="PROSITE" id="PS50862">
    <property type="entry name" value="AA_TRNA_LIGASE_II"/>
    <property type="match status" value="1"/>
</dbReference>
<evidence type="ECO:0000255" key="1">
    <source>
        <dbReference type="HAMAP-Rule" id="MF_01569"/>
    </source>
</evidence>
<keyword id="KW-0030">Aminoacyl-tRNA synthetase</keyword>
<keyword id="KW-0067">ATP-binding</keyword>
<keyword id="KW-0963">Cytoplasm</keyword>
<keyword id="KW-0436">Ligase</keyword>
<keyword id="KW-0547">Nucleotide-binding</keyword>
<keyword id="KW-0648">Protein biosynthesis</keyword>
<organism>
    <name type="scientific">Histophilus somni (strain 129Pt)</name>
    <name type="common">Haemophilus somnus</name>
    <dbReference type="NCBI Taxonomy" id="205914"/>
    <lineage>
        <taxon>Bacteria</taxon>
        <taxon>Pseudomonadati</taxon>
        <taxon>Pseudomonadota</taxon>
        <taxon>Gammaproteobacteria</taxon>
        <taxon>Pasteurellales</taxon>
        <taxon>Pasteurellaceae</taxon>
        <taxon>Histophilus</taxon>
    </lineage>
</organism>
<comment type="function">
    <text evidence="1">Catalyzes the attachment of proline to tRNA(Pro) in a two-step reaction: proline is first activated by ATP to form Pro-AMP and then transferred to the acceptor end of tRNA(Pro). As ProRS can inadvertently accommodate and process non-cognate amino acids such as alanine and cysteine, to avoid such errors it has two additional distinct editing activities against alanine. One activity is designated as 'pretransfer' editing and involves the tRNA(Pro)-independent hydrolysis of activated Ala-AMP. The other activity is designated 'posttransfer' editing and involves deacylation of mischarged Ala-tRNA(Pro). The misacylated Cys-tRNA(Pro) is not edited by ProRS.</text>
</comment>
<comment type="catalytic activity">
    <reaction evidence="1">
        <text>tRNA(Pro) + L-proline + ATP = L-prolyl-tRNA(Pro) + AMP + diphosphate</text>
        <dbReference type="Rhea" id="RHEA:14305"/>
        <dbReference type="Rhea" id="RHEA-COMP:9700"/>
        <dbReference type="Rhea" id="RHEA-COMP:9702"/>
        <dbReference type="ChEBI" id="CHEBI:30616"/>
        <dbReference type="ChEBI" id="CHEBI:33019"/>
        <dbReference type="ChEBI" id="CHEBI:60039"/>
        <dbReference type="ChEBI" id="CHEBI:78442"/>
        <dbReference type="ChEBI" id="CHEBI:78532"/>
        <dbReference type="ChEBI" id="CHEBI:456215"/>
        <dbReference type="EC" id="6.1.1.15"/>
    </reaction>
</comment>
<comment type="subunit">
    <text evidence="1">Homodimer.</text>
</comment>
<comment type="subcellular location">
    <subcellularLocation>
        <location evidence="1">Cytoplasm</location>
    </subcellularLocation>
</comment>
<comment type="domain">
    <text evidence="1">Consists of three domains: the N-terminal catalytic domain, the editing domain and the C-terminal anticodon-binding domain.</text>
</comment>
<comment type="similarity">
    <text evidence="1">Belongs to the class-II aminoacyl-tRNA synthetase family. ProS type 1 subfamily.</text>
</comment>
<feature type="chain" id="PRO_0000288330" description="Proline--tRNA ligase">
    <location>
        <begin position="1"/>
        <end position="571"/>
    </location>
</feature>
<accession>Q0I4S8</accession>
<proteinExistence type="inferred from homology"/>
<protein>
    <recommendedName>
        <fullName evidence="1">Proline--tRNA ligase</fullName>
        <ecNumber evidence="1">6.1.1.15</ecNumber>
    </recommendedName>
    <alternativeName>
        <fullName evidence="1">Prolyl-tRNA synthetase</fullName>
        <shortName evidence="1">ProRS</shortName>
    </alternativeName>
</protein>